<proteinExistence type="evidence at protein level"/>
<organism>
    <name type="scientific">Schizosaccharomyces pombe (strain 972 / ATCC 24843)</name>
    <name type="common">Fission yeast</name>
    <dbReference type="NCBI Taxonomy" id="284812"/>
    <lineage>
        <taxon>Eukaryota</taxon>
        <taxon>Fungi</taxon>
        <taxon>Dikarya</taxon>
        <taxon>Ascomycota</taxon>
        <taxon>Taphrinomycotina</taxon>
        <taxon>Schizosaccharomycetes</taxon>
        <taxon>Schizosaccharomycetales</taxon>
        <taxon>Schizosaccharomycetaceae</taxon>
        <taxon>Schizosaccharomyces</taxon>
    </lineage>
</organism>
<comment type="function">
    <text evidence="5">ATP-dependent 3'-5' DNA-helicase (PubMed:12724426). Has a role in the repair of UV-induced DNA damage in G2 via recombination-mediated repair. Also has a role in the repair of infrared-induced double DNA strand breaks.</text>
</comment>
<comment type="catalytic activity">
    <reaction evidence="5">
        <text>Couples ATP hydrolysis with the unwinding of duplex DNA by translocating in the 3'-5' direction.</text>
        <dbReference type="EC" id="5.6.2.4"/>
    </reaction>
</comment>
<comment type="catalytic activity">
    <reaction>
        <text>ATP + H2O = ADP + phosphate + H(+)</text>
        <dbReference type="Rhea" id="RHEA:13065"/>
        <dbReference type="ChEBI" id="CHEBI:15377"/>
        <dbReference type="ChEBI" id="CHEBI:15378"/>
        <dbReference type="ChEBI" id="CHEBI:30616"/>
        <dbReference type="ChEBI" id="CHEBI:43474"/>
        <dbReference type="ChEBI" id="CHEBI:456216"/>
    </reaction>
</comment>
<comment type="subunit">
    <text evidence="5">Interacts with top3.</text>
</comment>
<comment type="subcellular location">
    <subcellularLocation>
        <location evidence="5">Nucleus</location>
    </subcellularLocation>
</comment>
<comment type="disruption phenotype">
    <text evidence="5">Increased sensitivity to UV light (PubMed:12724426).</text>
</comment>
<comment type="similarity">
    <text evidence="7">Belongs to the helicase family. RecQ subfamily.</text>
</comment>
<feature type="chain" id="PRO_0000205058" description="ATP-dependent DNA helicase hus2/rqh1">
    <location>
        <begin position="1"/>
        <end position="1328"/>
    </location>
</feature>
<feature type="domain" description="Helicase ATP-binding" evidence="2">
    <location>
        <begin position="528"/>
        <end position="707"/>
    </location>
</feature>
<feature type="domain" description="Helicase C-terminal" evidence="3">
    <location>
        <begin position="728"/>
        <end position="876"/>
    </location>
</feature>
<feature type="domain" description="HRDC" evidence="1">
    <location>
        <begin position="1115"/>
        <end position="1195"/>
    </location>
</feature>
<feature type="region of interest" description="Disordered" evidence="4">
    <location>
        <begin position="217"/>
        <end position="254"/>
    </location>
</feature>
<feature type="region of interest" description="Disordered" evidence="4">
    <location>
        <begin position="1224"/>
        <end position="1247"/>
    </location>
</feature>
<feature type="region of interest" description="Disordered" evidence="4">
    <location>
        <begin position="1260"/>
        <end position="1328"/>
    </location>
</feature>
<feature type="short sequence motif" description="DEAH box">
    <location>
        <begin position="651"/>
        <end position="654"/>
    </location>
</feature>
<feature type="compositionally biased region" description="Low complexity" evidence="4">
    <location>
        <begin position="217"/>
        <end position="236"/>
    </location>
</feature>
<feature type="compositionally biased region" description="Low complexity" evidence="4">
    <location>
        <begin position="244"/>
        <end position="254"/>
    </location>
</feature>
<feature type="compositionally biased region" description="Polar residues" evidence="4">
    <location>
        <begin position="1260"/>
        <end position="1269"/>
    </location>
</feature>
<feature type="compositionally biased region" description="Basic residues" evidence="4">
    <location>
        <begin position="1283"/>
        <end position="1300"/>
    </location>
</feature>
<feature type="binding site" evidence="2">
    <location>
        <begin position="555"/>
        <end position="562"/>
    </location>
    <ligand>
        <name>ATP</name>
        <dbReference type="ChEBI" id="CHEBI:30616"/>
    </ligand>
</feature>
<feature type="mutagenesis site" description="In rad12; loss of helicase activity." evidence="5">
    <original>T</original>
    <variation>I</variation>
    <location>
        <position position="543"/>
    </location>
</feature>
<feature type="mutagenesis site" description="Loss of helicase activity." evidence="5">
    <original>K</original>
    <variation>A</variation>
    <variation>R</variation>
    <location>
        <position position="547"/>
    </location>
</feature>
<accession>Q09811</accession>
<reference key="1">
    <citation type="journal article" date="1997" name="EMBO J.">
        <title>rqh1+, a fission yeast gene related to the Bloom's and Werner's syndrome genes, is required for reversible S phase arrest.</title>
        <authorList>
            <person name="Stewart E.C."/>
            <person name="Chapman C.R."/>
            <person name="Al-Khodairy F."/>
            <person name="Carr A.M."/>
            <person name="Enoch T."/>
        </authorList>
    </citation>
    <scope>NUCLEOTIDE SEQUENCE [GENOMIC DNA]</scope>
</reference>
<reference key="2">
    <citation type="journal article" date="2002" name="Nature">
        <title>The genome sequence of Schizosaccharomyces pombe.</title>
        <authorList>
            <person name="Wood V."/>
            <person name="Gwilliam R."/>
            <person name="Rajandream M.A."/>
            <person name="Lyne M.H."/>
            <person name="Lyne R."/>
            <person name="Stewart A."/>
            <person name="Sgouros J.G."/>
            <person name="Peat N."/>
            <person name="Hayles J."/>
            <person name="Baker S.G."/>
            <person name="Basham D."/>
            <person name="Bowman S."/>
            <person name="Brooks K."/>
            <person name="Brown D."/>
            <person name="Brown S."/>
            <person name="Chillingworth T."/>
            <person name="Churcher C.M."/>
            <person name="Collins M."/>
            <person name="Connor R."/>
            <person name="Cronin A."/>
            <person name="Davis P."/>
            <person name="Feltwell T."/>
            <person name="Fraser A."/>
            <person name="Gentles S."/>
            <person name="Goble A."/>
            <person name="Hamlin N."/>
            <person name="Harris D.E."/>
            <person name="Hidalgo J."/>
            <person name="Hodgson G."/>
            <person name="Holroyd S."/>
            <person name="Hornsby T."/>
            <person name="Howarth S."/>
            <person name="Huckle E.J."/>
            <person name="Hunt S."/>
            <person name="Jagels K."/>
            <person name="James K.D."/>
            <person name="Jones L."/>
            <person name="Jones M."/>
            <person name="Leather S."/>
            <person name="McDonald S."/>
            <person name="McLean J."/>
            <person name="Mooney P."/>
            <person name="Moule S."/>
            <person name="Mungall K.L."/>
            <person name="Murphy L.D."/>
            <person name="Niblett D."/>
            <person name="Odell C."/>
            <person name="Oliver K."/>
            <person name="O'Neil S."/>
            <person name="Pearson D."/>
            <person name="Quail M.A."/>
            <person name="Rabbinowitsch E."/>
            <person name="Rutherford K.M."/>
            <person name="Rutter S."/>
            <person name="Saunders D."/>
            <person name="Seeger K."/>
            <person name="Sharp S."/>
            <person name="Skelton J."/>
            <person name="Simmonds M.N."/>
            <person name="Squares R."/>
            <person name="Squares S."/>
            <person name="Stevens K."/>
            <person name="Taylor K."/>
            <person name="Taylor R.G."/>
            <person name="Tivey A."/>
            <person name="Walsh S.V."/>
            <person name="Warren T."/>
            <person name="Whitehead S."/>
            <person name="Woodward J.R."/>
            <person name="Volckaert G."/>
            <person name="Aert R."/>
            <person name="Robben J."/>
            <person name="Grymonprez B."/>
            <person name="Weltjens I."/>
            <person name="Vanstreels E."/>
            <person name="Rieger M."/>
            <person name="Schaefer M."/>
            <person name="Mueller-Auer S."/>
            <person name="Gabel C."/>
            <person name="Fuchs M."/>
            <person name="Duesterhoeft A."/>
            <person name="Fritzc C."/>
            <person name="Holzer E."/>
            <person name="Moestl D."/>
            <person name="Hilbert H."/>
            <person name="Borzym K."/>
            <person name="Langer I."/>
            <person name="Beck A."/>
            <person name="Lehrach H."/>
            <person name="Reinhardt R."/>
            <person name="Pohl T.M."/>
            <person name="Eger P."/>
            <person name="Zimmermann W."/>
            <person name="Wedler H."/>
            <person name="Wambutt R."/>
            <person name="Purnelle B."/>
            <person name="Goffeau A."/>
            <person name="Cadieu E."/>
            <person name="Dreano S."/>
            <person name="Gloux S."/>
            <person name="Lelaure V."/>
            <person name="Mottier S."/>
            <person name="Galibert F."/>
            <person name="Aves S.J."/>
            <person name="Xiang Z."/>
            <person name="Hunt C."/>
            <person name="Moore K."/>
            <person name="Hurst S.M."/>
            <person name="Lucas M."/>
            <person name="Rochet M."/>
            <person name="Gaillardin C."/>
            <person name="Tallada V.A."/>
            <person name="Garzon A."/>
            <person name="Thode G."/>
            <person name="Daga R.R."/>
            <person name="Cruzado L."/>
            <person name="Jimenez J."/>
            <person name="Sanchez M."/>
            <person name="del Rey F."/>
            <person name="Benito J."/>
            <person name="Dominguez A."/>
            <person name="Revuelta J.L."/>
            <person name="Moreno S."/>
            <person name="Armstrong J."/>
            <person name="Forsburg S.L."/>
            <person name="Cerutti L."/>
            <person name="Lowe T."/>
            <person name="McCombie W.R."/>
            <person name="Paulsen I."/>
            <person name="Potashkin J."/>
            <person name="Shpakovski G.V."/>
            <person name="Ussery D."/>
            <person name="Barrell B.G."/>
            <person name="Nurse P."/>
        </authorList>
    </citation>
    <scope>NUCLEOTIDE SEQUENCE [LARGE SCALE GENOMIC DNA]</scope>
    <source>
        <strain>972 / ATCC 24843</strain>
    </source>
</reference>
<reference key="3">
    <citation type="journal article" date="2003" name="Mol. Cell. Biol.">
        <title>Role for the fission yeast RecQ helicase in DNA repair in G2.</title>
        <authorList>
            <person name="Laursen L.V."/>
            <person name="Ampatzidou E."/>
            <person name="Andersen A.H."/>
            <person name="Murray J.M."/>
        </authorList>
    </citation>
    <scope>FUNCTION AS A 3'-5' HELICASE</scope>
    <scope>CATALYTIC ACTIVITY</scope>
    <scope>INTERACTION WITH TOP3</scope>
    <scope>SUBCELLULAR LOCATION</scope>
    <scope>DISRUPTION PHENOTYPE</scope>
    <scope>MUTAGENESIS OF THR-543 AND LYS-547</scope>
</reference>
<evidence type="ECO:0000255" key="1">
    <source>
        <dbReference type="PROSITE-ProRule" id="PRU00328"/>
    </source>
</evidence>
<evidence type="ECO:0000255" key="2">
    <source>
        <dbReference type="PROSITE-ProRule" id="PRU00541"/>
    </source>
</evidence>
<evidence type="ECO:0000255" key="3">
    <source>
        <dbReference type="PROSITE-ProRule" id="PRU00542"/>
    </source>
</evidence>
<evidence type="ECO:0000256" key="4">
    <source>
        <dbReference type="SAM" id="MobiDB-lite"/>
    </source>
</evidence>
<evidence type="ECO:0000269" key="5">
    <source>
    </source>
</evidence>
<evidence type="ECO:0000303" key="6">
    <source>
    </source>
</evidence>
<evidence type="ECO:0000305" key="7"/>
<gene>
    <name evidence="6" type="primary">rqh1</name>
    <name type="synonym">hus2</name>
    <name type="synonym">rad12</name>
    <name type="synonym">rec9</name>
    <name type="ORF">SPAC2G11.12</name>
</gene>
<name>HUS2_SCHPO</name>
<sequence length="1328" mass="149646">MTVTKTNLNRHLDWFFRESPQKIENVTSPIKTLDFVKVKVSSSDIVVKDSIPHKSKNVFDDFDDGYAIDLTEEHQSSSLNNLKWKDVEGPNILKPIKKIAVPASESEEDFDDVDEEMLRAAEMEVFQSCQPLAVNTADTTVSHSTSSSNVPRSLNKIHDPSRFIKDNDVENRIHVSSASKVASISNTSKPNPIVSENPISATSVSIEIPIKPKELSNNLPFPRLNNNNTNNNNDNNAIEKRDSASPTPSSVSSQISIDFSTWPHQNLLQYLDILRDEKSEISDRIIEVMERYPFSSRFKEWIPKRDILSQKISSVLEVLSNNNNSNNNNGNNGTVPNAKTFFTPPSSITQQVPFPSTIIPESTVKENSTRPYVNSHLVANDKITATPFHSEAVVSPLQSNIRNSDIAEFDEFDIDDADFTFNTTDPINDESGASSDVVVIDDEEDDIENRPLNQALKASKAAVSNASLLQSSSLDRPLLGEMKDKNHKVLMPSLDDPMLSYPWSKEVLGCLKHKFHLKGFRKNQLEAINGTLSGKDVFILMPTGGGKSLCYQLPAVIEGGASRGVTLVISPLLSLMQDQLDHLRKLNIPSLPLSGEQPADERRQVISFLMAKNVLVKLLYVTPEGLASNGAITRVLKSLYERKLLARIVIDEAHCVSHWGHDFRPDYKQLGLLRDRYQGIPFMALTATANEIVKKDIINTLRMENCLELKSSFNRPNLFYEIKPKKDLYTELYRFISNGHLHESGIIYCLSRTSCEQVAAKLRNDYGLKAWHYHAGLEKVERQRIQNEWQSGSYKIIVATIAFGMGVDKGDVRFVIHHSFPKSLEGYYQETGRAGRDGKPAHCIMFYSYKDHVTFQKLIMSGDGDAETKERQRQMLRQVIQFCENKTDCRRKQVLAYFGENFDKVHCRKGCDICCEEATYIKQDMTEFSLQAIKLLKSISGKATLLQLMDIFRGSKSAKIVENGWDRLEGAGVGKLLNRGDSERLFHHLVSEGVFVEKVEANRRGFVSAYVVPGRQTIINSVLAGKRRIILDVKESSSKPDTSSRSLSRSKTLPALREYQLKSTTASVDCSIGTREVDEIYDSQMPPVKPSLIHSRNKIDLEELSGQKFMSEYEIDVMTRCLKDLKLLRSNLMAIDDSRVSSYFTDSVLLSMAKKLPRNVKELKEIHGVSNEKAVNLGPKFLQVIQKFIDEKEQNLEGTELDPSLQSLDTDYPIDTNALSLDHEQGFSDDSDSVYEPSSPIEEGDEEVDGQRKDILNFMNSQSLTQTGSVPKRKSTSYTRPSKSYRHKRGSTSYSRKRKYSTSQKDSRKTSKSANTSFIHPMVKQNYR</sequence>
<protein>
    <recommendedName>
        <fullName>ATP-dependent DNA helicase hus2/rqh1</fullName>
        <ecNumber evidence="5">5.6.2.4</ecNumber>
    </recommendedName>
    <alternativeName>
        <fullName evidence="7">DNA 3'-5' helicase Rqh1</fullName>
    </alternativeName>
</protein>
<dbReference type="EC" id="5.6.2.4" evidence="5"/>
<dbReference type="EMBL" id="Y09426">
    <property type="protein sequence ID" value="CAA70577.1"/>
    <property type="molecule type" value="Genomic_DNA"/>
</dbReference>
<dbReference type="EMBL" id="CU329670">
    <property type="protein sequence ID" value="CAA91177.1"/>
    <property type="molecule type" value="Genomic_DNA"/>
</dbReference>
<dbReference type="PIR" id="S62467">
    <property type="entry name" value="S62467"/>
</dbReference>
<dbReference type="RefSeq" id="NP_593092.1">
    <property type="nucleotide sequence ID" value="NM_001018490.2"/>
</dbReference>
<dbReference type="SMR" id="Q09811"/>
<dbReference type="BioGRID" id="278117">
    <property type="interactions" value="105"/>
</dbReference>
<dbReference type="DIP" id="DIP-61056N"/>
<dbReference type="FunCoup" id="Q09811">
    <property type="interactions" value="274"/>
</dbReference>
<dbReference type="IntAct" id="Q09811">
    <property type="interactions" value="1"/>
</dbReference>
<dbReference type="STRING" id="284812.Q09811"/>
<dbReference type="iPTMnet" id="Q09811"/>
<dbReference type="PaxDb" id="4896-SPAC2G11.12.1"/>
<dbReference type="EnsemblFungi" id="SPAC2G11.12.1">
    <property type="protein sequence ID" value="SPAC2G11.12.1:pep"/>
    <property type="gene ID" value="SPAC2G11.12"/>
</dbReference>
<dbReference type="GeneID" id="2541620"/>
<dbReference type="KEGG" id="spo:2541620"/>
<dbReference type="PomBase" id="SPAC2G11.12">
    <property type="gene designation" value="rqh1"/>
</dbReference>
<dbReference type="VEuPathDB" id="FungiDB:SPAC2G11.12"/>
<dbReference type="eggNOG" id="KOG0351">
    <property type="taxonomic scope" value="Eukaryota"/>
</dbReference>
<dbReference type="HOGENOM" id="CLU_001103_22_3_1"/>
<dbReference type="InParanoid" id="Q09811"/>
<dbReference type="OMA" id="GCDICCE"/>
<dbReference type="PhylomeDB" id="Q09811"/>
<dbReference type="PRO" id="PR:Q09811"/>
<dbReference type="Proteomes" id="UP000002485">
    <property type="component" value="Chromosome I"/>
</dbReference>
<dbReference type="GO" id="GO:0005694">
    <property type="term" value="C:chromosome"/>
    <property type="evidence" value="ECO:0000318"/>
    <property type="project" value="GO_Central"/>
</dbReference>
<dbReference type="GO" id="GO:0005737">
    <property type="term" value="C:cytoplasm"/>
    <property type="evidence" value="ECO:0000318"/>
    <property type="project" value="GO_Central"/>
</dbReference>
<dbReference type="GO" id="GO:0000228">
    <property type="term" value="C:nuclear chromosome"/>
    <property type="evidence" value="ECO:0000314"/>
    <property type="project" value="PomBase"/>
</dbReference>
<dbReference type="GO" id="GO:0043596">
    <property type="term" value="C:nuclear replication fork"/>
    <property type="evidence" value="ECO:0000305"/>
    <property type="project" value="PomBase"/>
</dbReference>
<dbReference type="GO" id="GO:0005730">
    <property type="term" value="C:nucleolus"/>
    <property type="evidence" value="ECO:0000314"/>
    <property type="project" value="PomBase"/>
</dbReference>
<dbReference type="GO" id="GO:0005634">
    <property type="term" value="C:nucleus"/>
    <property type="evidence" value="ECO:0000318"/>
    <property type="project" value="GO_Central"/>
</dbReference>
<dbReference type="GO" id="GO:0031422">
    <property type="term" value="C:RecQ family helicase-topoisomerase III complex"/>
    <property type="evidence" value="ECO:0000314"/>
    <property type="project" value="PomBase"/>
</dbReference>
<dbReference type="GO" id="GO:0035861">
    <property type="term" value="C:site of double-strand break"/>
    <property type="evidence" value="ECO:0000314"/>
    <property type="project" value="PomBase"/>
</dbReference>
<dbReference type="GO" id="GO:0043138">
    <property type="term" value="F:3'-5' DNA helicase activity"/>
    <property type="evidence" value="ECO:0000314"/>
    <property type="project" value="PomBase"/>
</dbReference>
<dbReference type="GO" id="GO:0005524">
    <property type="term" value="F:ATP binding"/>
    <property type="evidence" value="ECO:0000305"/>
    <property type="project" value="PomBase"/>
</dbReference>
<dbReference type="GO" id="GO:0016887">
    <property type="term" value="F:ATP hydrolysis activity"/>
    <property type="evidence" value="ECO:0007669"/>
    <property type="project" value="RHEA"/>
</dbReference>
<dbReference type="GO" id="GO:0003677">
    <property type="term" value="F:DNA binding"/>
    <property type="evidence" value="ECO:0000304"/>
    <property type="project" value="PomBase"/>
</dbReference>
<dbReference type="GO" id="GO:0009378">
    <property type="term" value="F:four-way junction helicase activity"/>
    <property type="evidence" value="ECO:0000318"/>
    <property type="project" value="GO_Central"/>
</dbReference>
<dbReference type="GO" id="GO:0006974">
    <property type="term" value="P:DNA damage response"/>
    <property type="evidence" value="ECO:0000315"/>
    <property type="project" value="PomBase"/>
</dbReference>
<dbReference type="GO" id="GO:0000729">
    <property type="term" value="P:DNA double-strand break processing"/>
    <property type="evidence" value="ECO:0000315"/>
    <property type="project" value="PomBase"/>
</dbReference>
<dbReference type="GO" id="GO:0006260">
    <property type="term" value="P:DNA replication"/>
    <property type="evidence" value="ECO:0000318"/>
    <property type="project" value="GO_Central"/>
</dbReference>
<dbReference type="GO" id="GO:0000724">
    <property type="term" value="P:double-strand break repair via homologous recombination"/>
    <property type="evidence" value="ECO:0000315"/>
    <property type="project" value="PomBase"/>
</dbReference>
<dbReference type="GO" id="GO:0043007">
    <property type="term" value="P:maintenance of rDNA"/>
    <property type="evidence" value="ECO:0000315"/>
    <property type="project" value="PomBase"/>
</dbReference>
<dbReference type="GO" id="GO:0031573">
    <property type="term" value="P:mitotic intra-S DNA damage checkpoint signaling"/>
    <property type="evidence" value="ECO:0000315"/>
    <property type="project" value="PomBase"/>
</dbReference>
<dbReference type="GO" id="GO:1990426">
    <property type="term" value="P:mitotic recombination-dependent replication fork processing"/>
    <property type="evidence" value="ECO:0000314"/>
    <property type="project" value="PomBase"/>
</dbReference>
<dbReference type="GO" id="GO:0006301">
    <property type="term" value="P:postreplication repair"/>
    <property type="evidence" value="ECO:0000315"/>
    <property type="project" value="PomBase"/>
</dbReference>
<dbReference type="GO" id="GO:0000725">
    <property type="term" value="P:recombinational repair"/>
    <property type="evidence" value="ECO:0000316"/>
    <property type="project" value="PomBase"/>
</dbReference>
<dbReference type="GO" id="GO:0031297">
    <property type="term" value="P:replication fork processing"/>
    <property type="evidence" value="ECO:0000316"/>
    <property type="project" value="PomBase"/>
</dbReference>
<dbReference type="GO" id="GO:0071140">
    <property type="term" value="P:resolution of mitotic recombination intermediates"/>
    <property type="evidence" value="ECO:0000315"/>
    <property type="project" value="PomBase"/>
</dbReference>
<dbReference type="GO" id="GO:0070914">
    <property type="term" value="P:UV-damage excision repair"/>
    <property type="evidence" value="ECO:0000315"/>
    <property type="project" value="PomBase"/>
</dbReference>
<dbReference type="CDD" id="cd17920">
    <property type="entry name" value="DEXHc_RecQ"/>
    <property type="match status" value="1"/>
</dbReference>
<dbReference type="CDD" id="cd18794">
    <property type="entry name" value="SF2_C_RecQ"/>
    <property type="match status" value="1"/>
</dbReference>
<dbReference type="FunFam" id="3.40.50.300:FF:000296">
    <property type="entry name" value="ATP-dependent DNA helicase RecQ"/>
    <property type="match status" value="1"/>
</dbReference>
<dbReference type="FunFam" id="3.40.50.300:FF:000340">
    <property type="entry name" value="Bloom syndrome, RecQ helicase"/>
    <property type="match status" value="1"/>
</dbReference>
<dbReference type="FunFam" id="1.10.10.10:FF:000495">
    <property type="entry name" value="RecQ family helicase MusN"/>
    <property type="match status" value="1"/>
</dbReference>
<dbReference type="Gene3D" id="1.10.150.80">
    <property type="entry name" value="HRDC domain"/>
    <property type="match status" value="1"/>
</dbReference>
<dbReference type="Gene3D" id="3.40.50.300">
    <property type="entry name" value="P-loop containing nucleotide triphosphate hydrolases"/>
    <property type="match status" value="2"/>
</dbReference>
<dbReference type="Gene3D" id="1.10.10.10">
    <property type="entry name" value="Winged helix-like DNA-binding domain superfamily/Winged helix DNA-binding domain"/>
    <property type="match status" value="1"/>
</dbReference>
<dbReference type="InterPro" id="IPR011545">
    <property type="entry name" value="DEAD/DEAH_box_helicase_dom"/>
</dbReference>
<dbReference type="InterPro" id="IPR002464">
    <property type="entry name" value="DNA/RNA_helicase_DEAH_CS"/>
</dbReference>
<dbReference type="InterPro" id="IPR004589">
    <property type="entry name" value="DNA_helicase_ATP-dep_RecQ"/>
</dbReference>
<dbReference type="InterPro" id="IPR014001">
    <property type="entry name" value="Helicase_ATP-bd"/>
</dbReference>
<dbReference type="InterPro" id="IPR001650">
    <property type="entry name" value="Helicase_C-like"/>
</dbReference>
<dbReference type="InterPro" id="IPR010997">
    <property type="entry name" value="HRDC-like_sf"/>
</dbReference>
<dbReference type="InterPro" id="IPR002121">
    <property type="entry name" value="HRDC_dom"/>
</dbReference>
<dbReference type="InterPro" id="IPR044876">
    <property type="entry name" value="HRDC_dom_sf"/>
</dbReference>
<dbReference type="InterPro" id="IPR027417">
    <property type="entry name" value="P-loop_NTPase"/>
</dbReference>
<dbReference type="InterPro" id="IPR032284">
    <property type="entry name" value="RecQ_Zn-bd"/>
</dbReference>
<dbReference type="InterPro" id="IPR018982">
    <property type="entry name" value="RQC_domain"/>
</dbReference>
<dbReference type="InterPro" id="IPR036388">
    <property type="entry name" value="WH-like_DNA-bd_sf"/>
</dbReference>
<dbReference type="NCBIfam" id="TIGR00614">
    <property type="entry name" value="recQ_fam"/>
    <property type="match status" value="1"/>
</dbReference>
<dbReference type="PANTHER" id="PTHR13710">
    <property type="entry name" value="DNA HELICASE RECQ FAMILY MEMBER"/>
    <property type="match status" value="1"/>
</dbReference>
<dbReference type="PANTHER" id="PTHR13710:SF153">
    <property type="entry name" value="RECQ-LIKE DNA HELICASE BLM"/>
    <property type="match status" value="1"/>
</dbReference>
<dbReference type="Pfam" id="PF00270">
    <property type="entry name" value="DEAD"/>
    <property type="match status" value="1"/>
</dbReference>
<dbReference type="Pfam" id="PF00271">
    <property type="entry name" value="Helicase_C"/>
    <property type="match status" value="1"/>
</dbReference>
<dbReference type="Pfam" id="PF00570">
    <property type="entry name" value="HRDC"/>
    <property type="match status" value="1"/>
</dbReference>
<dbReference type="Pfam" id="PF16124">
    <property type="entry name" value="RecQ_Zn_bind"/>
    <property type="match status" value="1"/>
</dbReference>
<dbReference type="Pfam" id="PF09382">
    <property type="entry name" value="RQC"/>
    <property type="match status" value="1"/>
</dbReference>
<dbReference type="SMART" id="SM00487">
    <property type="entry name" value="DEXDc"/>
    <property type="match status" value="1"/>
</dbReference>
<dbReference type="SMART" id="SM00490">
    <property type="entry name" value="HELICc"/>
    <property type="match status" value="1"/>
</dbReference>
<dbReference type="SMART" id="SM00341">
    <property type="entry name" value="HRDC"/>
    <property type="match status" value="1"/>
</dbReference>
<dbReference type="SMART" id="SM00956">
    <property type="entry name" value="RQC"/>
    <property type="match status" value="1"/>
</dbReference>
<dbReference type="SUPFAM" id="SSF47819">
    <property type="entry name" value="HRDC-like"/>
    <property type="match status" value="1"/>
</dbReference>
<dbReference type="SUPFAM" id="SSF52540">
    <property type="entry name" value="P-loop containing nucleoside triphosphate hydrolases"/>
    <property type="match status" value="2"/>
</dbReference>
<dbReference type="PROSITE" id="PS00690">
    <property type="entry name" value="DEAH_ATP_HELICASE"/>
    <property type="match status" value="1"/>
</dbReference>
<dbReference type="PROSITE" id="PS51192">
    <property type="entry name" value="HELICASE_ATP_BIND_1"/>
    <property type="match status" value="1"/>
</dbReference>
<dbReference type="PROSITE" id="PS51194">
    <property type="entry name" value="HELICASE_CTER"/>
    <property type="match status" value="1"/>
</dbReference>
<dbReference type="PROSITE" id="PS50967">
    <property type="entry name" value="HRDC"/>
    <property type="match status" value="1"/>
</dbReference>
<keyword id="KW-0067">ATP-binding</keyword>
<keyword id="KW-0227">DNA damage</keyword>
<keyword id="KW-0234">DNA repair</keyword>
<keyword id="KW-0238">DNA-binding</keyword>
<keyword id="KW-0347">Helicase</keyword>
<keyword id="KW-0378">Hydrolase</keyword>
<keyword id="KW-0413">Isomerase</keyword>
<keyword id="KW-0547">Nucleotide-binding</keyword>
<keyword id="KW-0539">Nucleus</keyword>
<keyword id="KW-1185">Reference proteome</keyword>